<proteinExistence type="inferred from homology"/>
<name>RL21_ALCBS</name>
<reference key="1">
    <citation type="journal article" date="2006" name="Nat. Biotechnol.">
        <title>Genome sequence of the ubiquitous hydrocarbon-degrading marine bacterium Alcanivorax borkumensis.</title>
        <authorList>
            <person name="Schneiker S."/>
            <person name="Martins dos Santos V.A.P."/>
            <person name="Bartels D."/>
            <person name="Bekel T."/>
            <person name="Brecht M."/>
            <person name="Buhrmester J."/>
            <person name="Chernikova T.N."/>
            <person name="Denaro R."/>
            <person name="Ferrer M."/>
            <person name="Gertler C."/>
            <person name="Goesmann A."/>
            <person name="Golyshina O.V."/>
            <person name="Kaminski F."/>
            <person name="Khachane A.N."/>
            <person name="Lang S."/>
            <person name="Linke B."/>
            <person name="McHardy A.C."/>
            <person name="Meyer F."/>
            <person name="Nechitaylo T."/>
            <person name="Puehler A."/>
            <person name="Regenhardt D."/>
            <person name="Rupp O."/>
            <person name="Sabirova J.S."/>
            <person name="Selbitschka W."/>
            <person name="Yakimov M.M."/>
            <person name="Timmis K.N."/>
            <person name="Vorhoelter F.-J."/>
            <person name="Weidner S."/>
            <person name="Kaiser O."/>
            <person name="Golyshin P.N."/>
        </authorList>
    </citation>
    <scope>NUCLEOTIDE SEQUENCE [LARGE SCALE GENOMIC DNA]</scope>
    <source>
        <strain>ATCC 700651 / DSM 11573 / NCIMB 13689 / SK2</strain>
    </source>
</reference>
<accession>Q0VSE8</accession>
<keyword id="KW-1185">Reference proteome</keyword>
<keyword id="KW-0687">Ribonucleoprotein</keyword>
<keyword id="KW-0689">Ribosomal protein</keyword>
<keyword id="KW-0694">RNA-binding</keyword>
<keyword id="KW-0699">rRNA-binding</keyword>
<protein>
    <recommendedName>
        <fullName evidence="1">Large ribosomal subunit protein bL21</fullName>
    </recommendedName>
    <alternativeName>
        <fullName evidence="2">50S ribosomal protein L21</fullName>
    </alternativeName>
</protein>
<comment type="function">
    <text evidence="1">This protein binds to 23S rRNA in the presence of protein L20.</text>
</comment>
<comment type="subunit">
    <text evidence="1">Part of the 50S ribosomal subunit. Contacts protein L20.</text>
</comment>
<comment type="similarity">
    <text evidence="1">Belongs to the bacterial ribosomal protein bL21 family.</text>
</comment>
<comment type="sequence caution" evidence="2">
    <conflict type="erroneous initiation">
        <sequence resource="EMBL-CDS" id="CAL15900"/>
    </conflict>
</comment>
<dbReference type="EMBL" id="AM286690">
    <property type="protein sequence ID" value="CAL15900.1"/>
    <property type="status" value="ALT_INIT"/>
    <property type="molecule type" value="Genomic_DNA"/>
</dbReference>
<dbReference type="RefSeq" id="WP_007148862.1">
    <property type="nucleotide sequence ID" value="NC_008260.1"/>
</dbReference>
<dbReference type="SMR" id="Q0VSE8"/>
<dbReference type="STRING" id="393595.ABO_0452"/>
<dbReference type="KEGG" id="abo:ABO_0452"/>
<dbReference type="eggNOG" id="COG0261">
    <property type="taxonomic scope" value="Bacteria"/>
</dbReference>
<dbReference type="HOGENOM" id="CLU_061463_3_2_6"/>
<dbReference type="OrthoDB" id="9813334at2"/>
<dbReference type="Proteomes" id="UP000008871">
    <property type="component" value="Chromosome"/>
</dbReference>
<dbReference type="GO" id="GO:0005737">
    <property type="term" value="C:cytoplasm"/>
    <property type="evidence" value="ECO:0007669"/>
    <property type="project" value="UniProtKB-ARBA"/>
</dbReference>
<dbReference type="GO" id="GO:1990904">
    <property type="term" value="C:ribonucleoprotein complex"/>
    <property type="evidence" value="ECO:0007669"/>
    <property type="project" value="UniProtKB-KW"/>
</dbReference>
<dbReference type="GO" id="GO:0005840">
    <property type="term" value="C:ribosome"/>
    <property type="evidence" value="ECO:0007669"/>
    <property type="project" value="UniProtKB-KW"/>
</dbReference>
<dbReference type="GO" id="GO:0019843">
    <property type="term" value="F:rRNA binding"/>
    <property type="evidence" value="ECO:0007669"/>
    <property type="project" value="UniProtKB-UniRule"/>
</dbReference>
<dbReference type="GO" id="GO:0003735">
    <property type="term" value="F:structural constituent of ribosome"/>
    <property type="evidence" value="ECO:0007669"/>
    <property type="project" value="InterPro"/>
</dbReference>
<dbReference type="GO" id="GO:0006412">
    <property type="term" value="P:translation"/>
    <property type="evidence" value="ECO:0007669"/>
    <property type="project" value="UniProtKB-UniRule"/>
</dbReference>
<dbReference type="HAMAP" id="MF_01363">
    <property type="entry name" value="Ribosomal_bL21"/>
    <property type="match status" value="1"/>
</dbReference>
<dbReference type="InterPro" id="IPR028909">
    <property type="entry name" value="bL21-like"/>
</dbReference>
<dbReference type="InterPro" id="IPR036164">
    <property type="entry name" value="bL21-like_sf"/>
</dbReference>
<dbReference type="InterPro" id="IPR001787">
    <property type="entry name" value="Ribosomal_bL21"/>
</dbReference>
<dbReference type="InterPro" id="IPR018258">
    <property type="entry name" value="Ribosomal_bL21_CS"/>
</dbReference>
<dbReference type="NCBIfam" id="TIGR00061">
    <property type="entry name" value="L21"/>
    <property type="match status" value="1"/>
</dbReference>
<dbReference type="PANTHER" id="PTHR21349">
    <property type="entry name" value="50S RIBOSOMAL PROTEIN L21"/>
    <property type="match status" value="1"/>
</dbReference>
<dbReference type="PANTHER" id="PTHR21349:SF0">
    <property type="entry name" value="LARGE RIBOSOMAL SUBUNIT PROTEIN BL21M"/>
    <property type="match status" value="1"/>
</dbReference>
<dbReference type="Pfam" id="PF00829">
    <property type="entry name" value="Ribosomal_L21p"/>
    <property type="match status" value="1"/>
</dbReference>
<dbReference type="SUPFAM" id="SSF141091">
    <property type="entry name" value="L21p-like"/>
    <property type="match status" value="1"/>
</dbReference>
<dbReference type="PROSITE" id="PS01169">
    <property type="entry name" value="RIBOSOMAL_L21"/>
    <property type="match status" value="1"/>
</dbReference>
<feature type="chain" id="PRO_0000269269" description="Large ribosomal subunit protein bL21">
    <location>
        <begin position="1"/>
        <end position="103"/>
    </location>
</feature>
<organism>
    <name type="scientific">Alcanivorax borkumensis (strain ATCC 700651 / DSM 11573 / NCIMB 13689 / SK2)</name>
    <dbReference type="NCBI Taxonomy" id="393595"/>
    <lineage>
        <taxon>Bacteria</taxon>
        <taxon>Pseudomonadati</taxon>
        <taxon>Pseudomonadota</taxon>
        <taxon>Gammaproteobacteria</taxon>
        <taxon>Oceanospirillales</taxon>
        <taxon>Alcanivoracaceae</taxon>
        <taxon>Alcanivorax</taxon>
    </lineage>
</organism>
<gene>
    <name evidence="1" type="primary">rplU</name>
    <name type="ordered locus">ABO_0452</name>
</gene>
<evidence type="ECO:0000255" key="1">
    <source>
        <dbReference type="HAMAP-Rule" id="MF_01363"/>
    </source>
</evidence>
<evidence type="ECO:0000305" key="2"/>
<sequence>MYAVIKTGGKQYRVEEGDVVRIEKIEVATGESVDFDQVLLVANGDDVKVGQPMLDGAKVTAEVLEQGRHKKIKIVKFRRRKHSRKQQGHRQWYTAVKITGIQG</sequence>